<organism>
    <name type="scientific">Homo sapiens</name>
    <name type="common">Human</name>
    <dbReference type="NCBI Taxonomy" id="9606"/>
    <lineage>
        <taxon>Eukaryota</taxon>
        <taxon>Metazoa</taxon>
        <taxon>Chordata</taxon>
        <taxon>Craniata</taxon>
        <taxon>Vertebrata</taxon>
        <taxon>Euteleostomi</taxon>
        <taxon>Mammalia</taxon>
        <taxon>Eutheria</taxon>
        <taxon>Euarchontoglires</taxon>
        <taxon>Primates</taxon>
        <taxon>Haplorrhini</taxon>
        <taxon>Catarrhini</taxon>
        <taxon>Hominidae</taxon>
        <taxon>Homo</taxon>
    </lineage>
</organism>
<accession>Q9BXK1</accession>
<feature type="chain" id="PRO_0000047158" description="Krueppel-like factor 16">
    <location>
        <begin position="1"/>
        <end position="252"/>
    </location>
</feature>
<feature type="zinc finger region" description="C2H2-type 1" evidence="2">
    <location>
        <begin position="127"/>
        <end position="150"/>
    </location>
</feature>
<feature type="zinc finger region" description="C2H2-type 2" evidence="2">
    <location>
        <begin position="157"/>
        <end position="181"/>
    </location>
</feature>
<feature type="zinc finger region" description="C2H2-type 3" evidence="2">
    <location>
        <begin position="187"/>
        <end position="209"/>
    </location>
</feature>
<feature type="region of interest" description="Disordered" evidence="3">
    <location>
        <begin position="25"/>
        <end position="74"/>
    </location>
</feature>
<feature type="region of interest" description="Disordered" evidence="3">
    <location>
        <begin position="90"/>
        <end position="128"/>
    </location>
</feature>
<feature type="region of interest" description="Disordered" evidence="3">
    <location>
        <begin position="204"/>
        <end position="252"/>
    </location>
</feature>
<feature type="compositionally biased region" description="Pro residues" evidence="3">
    <location>
        <begin position="55"/>
        <end position="65"/>
    </location>
</feature>
<feature type="compositionally biased region" description="Low complexity" evidence="3">
    <location>
        <begin position="96"/>
        <end position="124"/>
    </location>
</feature>
<feature type="compositionally biased region" description="Low complexity" evidence="3">
    <location>
        <begin position="230"/>
        <end position="239"/>
    </location>
</feature>
<feature type="compositionally biased region" description="Pro residues" evidence="3">
    <location>
        <begin position="240"/>
        <end position="252"/>
    </location>
</feature>
<feature type="modified residue" description="Phosphoserine" evidence="5 6 7 8">
    <location>
        <position position="99"/>
    </location>
</feature>
<feature type="modified residue" description="Phosphothreonine" evidence="6">
    <location>
        <position position="152"/>
    </location>
</feature>
<proteinExistence type="evidence at protein level"/>
<dbReference type="EMBL" id="AF327440">
    <property type="protein sequence ID" value="AAK15698.1"/>
    <property type="molecule type" value="mRNA"/>
</dbReference>
<dbReference type="CCDS" id="CCDS12075.1"/>
<dbReference type="RefSeq" id="NP_114124.1">
    <property type="nucleotide sequence ID" value="NM_031918.4"/>
</dbReference>
<dbReference type="SMR" id="Q9BXK1"/>
<dbReference type="BioGRID" id="123771">
    <property type="interactions" value="434"/>
</dbReference>
<dbReference type="ELM" id="Q9BXK1"/>
<dbReference type="FunCoup" id="Q9BXK1">
    <property type="interactions" value="495"/>
</dbReference>
<dbReference type="IntAct" id="Q9BXK1">
    <property type="interactions" value="407"/>
</dbReference>
<dbReference type="MINT" id="Q9BXK1"/>
<dbReference type="STRING" id="9606.ENSP00000250916"/>
<dbReference type="GlyGen" id="Q9BXK1">
    <property type="glycosylation" value="2 sites, 1 O-linked glycan (1 site)"/>
</dbReference>
<dbReference type="iPTMnet" id="Q9BXK1"/>
<dbReference type="PhosphoSitePlus" id="Q9BXK1"/>
<dbReference type="SwissPalm" id="Q9BXK1"/>
<dbReference type="BioMuta" id="KLF16"/>
<dbReference type="DMDM" id="17366682"/>
<dbReference type="jPOST" id="Q9BXK1"/>
<dbReference type="MassIVE" id="Q9BXK1"/>
<dbReference type="PaxDb" id="9606-ENSP00000250916"/>
<dbReference type="PeptideAtlas" id="Q9BXK1"/>
<dbReference type="ProteomicsDB" id="79445"/>
<dbReference type="Pumba" id="Q9BXK1"/>
<dbReference type="Antibodypedia" id="22829">
    <property type="antibodies" value="189 antibodies from 27 providers"/>
</dbReference>
<dbReference type="DNASU" id="83855"/>
<dbReference type="Ensembl" id="ENST00000250916.6">
    <property type="protein sequence ID" value="ENSP00000250916.3"/>
    <property type="gene ID" value="ENSG00000129911.9"/>
</dbReference>
<dbReference type="Ensembl" id="ENST00000541015.5">
    <property type="protein sequence ID" value="ENSP00000439973.1"/>
    <property type="gene ID" value="ENSG00000129911.9"/>
</dbReference>
<dbReference type="Ensembl" id="ENST00000617223.1">
    <property type="protein sequence ID" value="ENSP00000483701.1"/>
    <property type="gene ID" value="ENSG00000129911.9"/>
</dbReference>
<dbReference type="GeneID" id="83855"/>
<dbReference type="KEGG" id="hsa:83855"/>
<dbReference type="MANE-Select" id="ENST00000250916.6">
    <property type="protein sequence ID" value="ENSP00000250916.3"/>
    <property type="RefSeq nucleotide sequence ID" value="NM_031918.4"/>
    <property type="RefSeq protein sequence ID" value="NP_114124.1"/>
</dbReference>
<dbReference type="UCSC" id="uc002luc.4">
    <property type="organism name" value="human"/>
</dbReference>
<dbReference type="AGR" id="HGNC:16857"/>
<dbReference type="CTD" id="83855"/>
<dbReference type="DisGeNET" id="83855"/>
<dbReference type="GeneCards" id="KLF16"/>
<dbReference type="HGNC" id="HGNC:16857">
    <property type="gene designation" value="KLF16"/>
</dbReference>
<dbReference type="HPA" id="ENSG00000129911">
    <property type="expression patterns" value="Tissue enhanced (brain)"/>
</dbReference>
<dbReference type="MIM" id="606139">
    <property type="type" value="gene"/>
</dbReference>
<dbReference type="neXtProt" id="NX_Q9BXK1"/>
<dbReference type="NIAGADS" id="ENSG00000129911"/>
<dbReference type="OpenTargets" id="ENSG00000129911"/>
<dbReference type="PharmGKB" id="PA30135"/>
<dbReference type="VEuPathDB" id="HostDB:ENSG00000129911"/>
<dbReference type="eggNOG" id="KOG1721">
    <property type="taxonomic scope" value="Eukaryota"/>
</dbReference>
<dbReference type="GeneTree" id="ENSGT00940000163280"/>
<dbReference type="HOGENOM" id="CLU_002678_33_2_1"/>
<dbReference type="InParanoid" id="Q9BXK1"/>
<dbReference type="OMA" id="FQGCIKV"/>
<dbReference type="OrthoDB" id="4748970at2759"/>
<dbReference type="PAN-GO" id="Q9BXK1">
    <property type="GO annotations" value="3 GO annotations based on evolutionary models"/>
</dbReference>
<dbReference type="PhylomeDB" id="Q9BXK1"/>
<dbReference type="TreeFam" id="TF351003"/>
<dbReference type="PathwayCommons" id="Q9BXK1"/>
<dbReference type="Reactome" id="R-HSA-9839394">
    <property type="pathway name" value="TGFBR3 expression"/>
</dbReference>
<dbReference type="SignaLink" id="Q9BXK1"/>
<dbReference type="SIGNOR" id="Q9BXK1"/>
<dbReference type="BioGRID-ORCS" id="83855">
    <property type="hits" value="192 hits in 1183 CRISPR screens"/>
</dbReference>
<dbReference type="GenomeRNAi" id="83855"/>
<dbReference type="Pharos" id="Q9BXK1">
    <property type="development level" value="Tbio"/>
</dbReference>
<dbReference type="PRO" id="PR:Q9BXK1"/>
<dbReference type="Proteomes" id="UP000005640">
    <property type="component" value="Chromosome 19"/>
</dbReference>
<dbReference type="RNAct" id="Q9BXK1">
    <property type="molecule type" value="protein"/>
</dbReference>
<dbReference type="Bgee" id="ENSG00000129911">
    <property type="expression patterns" value="Expressed in nucleus accumbens and 139 other cell types or tissues"/>
</dbReference>
<dbReference type="ExpressionAtlas" id="Q9BXK1">
    <property type="expression patterns" value="baseline and differential"/>
</dbReference>
<dbReference type="GO" id="GO:0000785">
    <property type="term" value="C:chromatin"/>
    <property type="evidence" value="ECO:0000247"/>
    <property type="project" value="NTNU_SB"/>
</dbReference>
<dbReference type="GO" id="GO:0005634">
    <property type="term" value="C:nucleus"/>
    <property type="evidence" value="ECO:0007669"/>
    <property type="project" value="UniProtKB-SubCell"/>
</dbReference>
<dbReference type="GO" id="GO:0000981">
    <property type="term" value="F:DNA-binding transcription factor activity, RNA polymerase II-specific"/>
    <property type="evidence" value="ECO:0000247"/>
    <property type="project" value="NTNU_SB"/>
</dbReference>
<dbReference type="GO" id="GO:0001227">
    <property type="term" value="F:DNA-binding transcription repressor activity, RNA polymerase II-specific"/>
    <property type="evidence" value="ECO:0007669"/>
    <property type="project" value="Ensembl"/>
</dbReference>
<dbReference type="GO" id="GO:0000978">
    <property type="term" value="F:RNA polymerase II cis-regulatory region sequence-specific DNA binding"/>
    <property type="evidence" value="ECO:0000318"/>
    <property type="project" value="GO_Central"/>
</dbReference>
<dbReference type="GO" id="GO:1990837">
    <property type="term" value="F:sequence-specific double-stranded DNA binding"/>
    <property type="evidence" value="ECO:0000314"/>
    <property type="project" value="ARUK-UCL"/>
</dbReference>
<dbReference type="GO" id="GO:0008270">
    <property type="term" value="F:zinc ion binding"/>
    <property type="evidence" value="ECO:0007669"/>
    <property type="project" value="UniProtKB-KW"/>
</dbReference>
<dbReference type="GO" id="GO:0007212">
    <property type="term" value="P:G protein-coupled dopamine receptor signaling pathway"/>
    <property type="evidence" value="ECO:0007669"/>
    <property type="project" value="Ensembl"/>
</dbReference>
<dbReference type="GO" id="GO:0006357">
    <property type="term" value="P:regulation of transcription by RNA polymerase II"/>
    <property type="evidence" value="ECO:0000318"/>
    <property type="project" value="GO_Central"/>
</dbReference>
<dbReference type="CDD" id="cd21573">
    <property type="entry name" value="KLF16_N"/>
    <property type="match status" value="1"/>
</dbReference>
<dbReference type="FunFam" id="3.30.160.60:FF:000595">
    <property type="entry name" value="Krueppel-like factor 14"/>
    <property type="match status" value="1"/>
</dbReference>
<dbReference type="FunFam" id="3.30.160.60:FF:000018">
    <property type="entry name" value="Krueppel-like factor 15"/>
    <property type="match status" value="1"/>
</dbReference>
<dbReference type="FunFam" id="3.30.160.60:FF:000125">
    <property type="entry name" value="Putative zinc finger protein 143"/>
    <property type="match status" value="1"/>
</dbReference>
<dbReference type="Gene3D" id="3.30.160.60">
    <property type="entry name" value="Classic Zinc Finger"/>
    <property type="match status" value="3"/>
</dbReference>
<dbReference type="InterPro" id="IPR036236">
    <property type="entry name" value="Znf_C2H2_sf"/>
</dbReference>
<dbReference type="InterPro" id="IPR013087">
    <property type="entry name" value="Znf_C2H2_type"/>
</dbReference>
<dbReference type="PANTHER" id="PTHR23235:SF71">
    <property type="entry name" value="KRUEPPEL-LIKE FACTOR 16"/>
    <property type="match status" value="1"/>
</dbReference>
<dbReference type="PANTHER" id="PTHR23235">
    <property type="entry name" value="KRUEPPEL-LIKE TRANSCRIPTION FACTOR"/>
    <property type="match status" value="1"/>
</dbReference>
<dbReference type="Pfam" id="PF00096">
    <property type="entry name" value="zf-C2H2"/>
    <property type="match status" value="3"/>
</dbReference>
<dbReference type="SMART" id="SM00355">
    <property type="entry name" value="ZnF_C2H2"/>
    <property type="match status" value="3"/>
</dbReference>
<dbReference type="SUPFAM" id="SSF57667">
    <property type="entry name" value="beta-beta-alpha zinc fingers"/>
    <property type="match status" value="2"/>
</dbReference>
<dbReference type="PROSITE" id="PS00028">
    <property type="entry name" value="ZINC_FINGER_C2H2_1"/>
    <property type="match status" value="3"/>
</dbReference>
<dbReference type="PROSITE" id="PS50157">
    <property type="entry name" value="ZINC_FINGER_C2H2_2"/>
    <property type="match status" value="3"/>
</dbReference>
<name>KLF16_HUMAN</name>
<sequence>MSAAVACVDYFAADVLMAISSGAVVHRGRPGPEGAGPAAGLDVRAARREAASPGTPGPPPPPPAASGPGPGAAAAPHLLAASILADLRGGPGAAPGGASPASSSSAASSPSSGRAPGAAPSAAAKSHRCPFPDCAKAYYKSSHLKSHLRTHTGERPFACDWQGCDKKFARSDELARHHRTHTGEKRFSCPLCSKRFTRSDHLAKHARRHPGFHPDLLRRPGARSTSPSDSLPCSLAGSPAPSPAPSPAPAGL</sequence>
<gene>
    <name type="primary">KLF16</name>
    <name type="synonym">BTEB4</name>
    <name type="synonym">NSLP2</name>
</gene>
<reference key="1">
    <citation type="journal article" date="2000" name="Pancreas">
        <title>Isolation of a novel zinc finger transcription factor from the pancreas extends the repertoire of Sp1-like proteins present in this organ (Abstract #153).</title>
        <authorList>
            <person name="Conley A."/>
            <person name="Urrutia R."/>
        </authorList>
    </citation>
    <scope>NUCLEOTIDE SEQUENCE [MRNA]</scope>
    <source>
        <tissue>Pancreas</tissue>
    </source>
</reference>
<reference key="2">
    <citation type="journal article" date="2008" name="J. Proteome Res.">
        <title>Combining protein-based IMAC, peptide-based IMAC, and MudPIT for efficient phosphoproteomic analysis.</title>
        <authorList>
            <person name="Cantin G.T."/>
            <person name="Yi W."/>
            <person name="Lu B."/>
            <person name="Park S.K."/>
            <person name="Xu T."/>
            <person name="Lee J.-D."/>
            <person name="Yates J.R. III"/>
        </authorList>
    </citation>
    <scope>PHOSPHORYLATION [LARGE SCALE ANALYSIS] AT SER-99</scope>
    <scope>IDENTIFICATION BY MASS SPECTROMETRY [LARGE SCALE ANALYSIS]</scope>
    <source>
        <tissue>Cervix carcinoma</tissue>
    </source>
</reference>
<reference key="3">
    <citation type="journal article" date="2008" name="Proc. Natl. Acad. Sci. U.S.A.">
        <title>A quantitative atlas of mitotic phosphorylation.</title>
        <authorList>
            <person name="Dephoure N."/>
            <person name="Zhou C."/>
            <person name="Villen J."/>
            <person name="Beausoleil S.A."/>
            <person name="Bakalarski C.E."/>
            <person name="Elledge S.J."/>
            <person name="Gygi S.P."/>
        </authorList>
    </citation>
    <scope>PHOSPHORYLATION [LARGE SCALE ANALYSIS] AT SER-99 AND THR-152</scope>
    <scope>IDENTIFICATION BY MASS SPECTROMETRY [LARGE SCALE ANALYSIS]</scope>
    <source>
        <tissue>Cervix carcinoma</tissue>
    </source>
</reference>
<reference key="4">
    <citation type="journal article" date="2009" name="Anal. Chem.">
        <title>Lys-N and trypsin cover complementary parts of the phosphoproteome in a refined SCX-based approach.</title>
        <authorList>
            <person name="Gauci S."/>
            <person name="Helbig A.O."/>
            <person name="Slijper M."/>
            <person name="Krijgsveld J."/>
            <person name="Heck A.J."/>
            <person name="Mohammed S."/>
        </authorList>
    </citation>
    <scope>IDENTIFICATION BY MASS SPECTROMETRY [LARGE SCALE ANALYSIS]</scope>
</reference>
<reference key="5">
    <citation type="journal article" date="2009" name="Sci. Signal.">
        <title>Quantitative phosphoproteomic analysis of T cell receptor signaling reveals system-wide modulation of protein-protein interactions.</title>
        <authorList>
            <person name="Mayya V."/>
            <person name="Lundgren D.H."/>
            <person name="Hwang S.-I."/>
            <person name="Rezaul K."/>
            <person name="Wu L."/>
            <person name="Eng J.K."/>
            <person name="Rodionov V."/>
            <person name="Han D.K."/>
        </authorList>
    </citation>
    <scope>PHOSPHORYLATION [LARGE SCALE ANALYSIS] AT SER-99</scope>
    <scope>IDENTIFICATION BY MASS SPECTROMETRY [LARGE SCALE ANALYSIS]</scope>
    <source>
        <tissue>Leukemic T-cell</tissue>
    </source>
</reference>
<reference key="6">
    <citation type="journal article" date="2010" name="Sci. Signal.">
        <title>Quantitative phosphoproteomics reveals widespread full phosphorylation site occupancy during mitosis.</title>
        <authorList>
            <person name="Olsen J.V."/>
            <person name="Vermeulen M."/>
            <person name="Santamaria A."/>
            <person name="Kumar C."/>
            <person name="Miller M.L."/>
            <person name="Jensen L.J."/>
            <person name="Gnad F."/>
            <person name="Cox J."/>
            <person name="Jensen T.S."/>
            <person name="Nigg E.A."/>
            <person name="Brunak S."/>
            <person name="Mann M."/>
        </authorList>
    </citation>
    <scope>IDENTIFICATION BY MASS SPECTROMETRY [LARGE SCALE ANALYSIS]</scope>
    <source>
        <tissue>Cervix carcinoma</tissue>
    </source>
</reference>
<reference key="7">
    <citation type="journal article" date="2013" name="J. Proteome Res.">
        <title>Toward a comprehensive characterization of a human cancer cell phosphoproteome.</title>
        <authorList>
            <person name="Zhou H."/>
            <person name="Di Palma S."/>
            <person name="Preisinger C."/>
            <person name="Peng M."/>
            <person name="Polat A.N."/>
            <person name="Heck A.J."/>
            <person name="Mohammed S."/>
        </authorList>
    </citation>
    <scope>PHOSPHORYLATION [LARGE SCALE ANALYSIS] AT SER-99</scope>
    <scope>IDENTIFICATION BY MASS SPECTROMETRY [LARGE SCALE ANALYSIS]</scope>
    <source>
        <tissue>Cervix carcinoma</tissue>
        <tissue>Erythroleukemia</tissue>
    </source>
</reference>
<keyword id="KW-0238">DNA-binding</keyword>
<keyword id="KW-0479">Metal-binding</keyword>
<keyword id="KW-0539">Nucleus</keyword>
<keyword id="KW-0597">Phosphoprotein</keyword>
<keyword id="KW-1267">Proteomics identification</keyword>
<keyword id="KW-1185">Reference proteome</keyword>
<keyword id="KW-0677">Repeat</keyword>
<keyword id="KW-0804">Transcription</keyword>
<keyword id="KW-0805">Transcription regulation</keyword>
<keyword id="KW-0862">Zinc</keyword>
<keyword id="KW-0863">Zinc-finger</keyword>
<comment type="function">
    <text evidence="1">Transcription factor that binds GC and GT boxes and displaces Sp1 and Sp3 from these sequences. Modulates dopaminergic transmission in the brain (By similarity).</text>
</comment>
<comment type="interaction">
    <interactant intactId="EBI-5457991">
        <id>Q9BXK1</id>
    </interactant>
    <interactant intactId="EBI-12094670">
        <id>Q8WUI4-6</id>
        <label>HDAC7</label>
    </interactant>
    <organismsDiffer>false</organismsDiffer>
    <experiments>3</experiments>
</comment>
<comment type="subcellular location">
    <subcellularLocation>
        <location evidence="1">Nucleus</location>
    </subcellularLocation>
</comment>
<comment type="similarity">
    <text evidence="4">Belongs to the Sp1 C2H2-type zinc-finger protein family.</text>
</comment>
<protein>
    <recommendedName>
        <fullName>Krueppel-like factor 16</fullName>
    </recommendedName>
    <alternativeName>
        <fullName>Basic transcription element-binding protein 4</fullName>
        <shortName>BTE-binding protein 4</shortName>
    </alternativeName>
    <alternativeName>
        <fullName>Novel Sp1-like zinc finger transcription factor 2</fullName>
    </alternativeName>
    <alternativeName>
        <fullName>Transcription factor BTEB4</fullName>
    </alternativeName>
    <alternativeName>
        <fullName>Transcription factor NSLP2</fullName>
    </alternativeName>
</protein>
<evidence type="ECO:0000250" key="1"/>
<evidence type="ECO:0000255" key="2">
    <source>
        <dbReference type="PROSITE-ProRule" id="PRU00042"/>
    </source>
</evidence>
<evidence type="ECO:0000256" key="3">
    <source>
        <dbReference type="SAM" id="MobiDB-lite"/>
    </source>
</evidence>
<evidence type="ECO:0000305" key="4"/>
<evidence type="ECO:0007744" key="5">
    <source>
    </source>
</evidence>
<evidence type="ECO:0007744" key="6">
    <source>
    </source>
</evidence>
<evidence type="ECO:0007744" key="7">
    <source>
    </source>
</evidence>
<evidence type="ECO:0007744" key="8">
    <source>
    </source>
</evidence>